<sequence length="678" mass="76326">MPPSKGLNGKLEKPKHALQAIVLSDSYNYRFRPLTLDKPRCLLPLANTPLIEYTFEFLALAGVQEVYVFCCAHAGQIREYIEKSKWNLPSSPFSVNTIVSRESLSVGDALRELDSKQLITSDFILVSGDVVSNVPLNEVLKEHRKRREDDKNAIMTMVVREASPFHRTRARTESSVFVIDKKTSQCVHYQANERGKHYVSMDPEIFNEHEELEVRNDLIDCQIDICSNDVPALFTENFDYQDIRKDFVYGVLTSDLLGKKIHCHVAKENYAARVRSLQTYDAISKDVLSRWVYPFVPDSNLLNQTFSYQRHQIYKEEDVVLARSCIIKARTLIGAYTKVGDASVVANTIIGRNCTIGSNCSIDSAFLWEDVVIGDNCRIGKAILANSVKIGNNCSIEDGAIVAAGVVIGDNTIIEKNKRLTTFESHSQGTLNDPSLVGIGGRGQEYHAEEDSDDEGEFMEASGLIESTNELHLSDSESSETSSSSEEDMEFIPFSARRDSANTINSEDFDEGDFNKEAQQSLERAFEENHQIDIAALELNTLRMAMNANYHEVRSAIVLALLRRIMHLDVSPKEALAKVMTRWGPLLAKLTFSHEEQVDNVLTLQKYCVRLSMTRHFLQLLGYFYQLEIAEENAIQEWYSDPRSSEGELAALRDAGGKQFVDWLNTAESESESEEGSE</sequence>
<reference key="1">
    <citation type="journal article" date="2002" name="Nature">
        <title>The genome sequence of Schizosaccharomyces pombe.</title>
        <authorList>
            <person name="Wood V."/>
            <person name="Gwilliam R."/>
            <person name="Rajandream M.A."/>
            <person name="Lyne M.H."/>
            <person name="Lyne R."/>
            <person name="Stewart A."/>
            <person name="Sgouros J.G."/>
            <person name="Peat N."/>
            <person name="Hayles J."/>
            <person name="Baker S.G."/>
            <person name="Basham D."/>
            <person name="Bowman S."/>
            <person name="Brooks K."/>
            <person name="Brown D."/>
            <person name="Brown S."/>
            <person name="Chillingworth T."/>
            <person name="Churcher C.M."/>
            <person name="Collins M."/>
            <person name="Connor R."/>
            <person name="Cronin A."/>
            <person name="Davis P."/>
            <person name="Feltwell T."/>
            <person name="Fraser A."/>
            <person name="Gentles S."/>
            <person name="Goble A."/>
            <person name="Hamlin N."/>
            <person name="Harris D.E."/>
            <person name="Hidalgo J."/>
            <person name="Hodgson G."/>
            <person name="Holroyd S."/>
            <person name="Hornsby T."/>
            <person name="Howarth S."/>
            <person name="Huckle E.J."/>
            <person name="Hunt S."/>
            <person name="Jagels K."/>
            <person name="James K.D."/>
            <person name="Jones L."/>
            <person name="Jones M."/>
            <person name="Leather S."/>
            <person name="McDonald S."/>
            <person name="McLean J."/>
            <person name="Mooney P."/>
            <person name="Moule S."/>
            <person name="Mungall K.L."/>
            <person name="Murphy L.D."/>
            <person name="Niblett D."/>
            <person name="Odell C."/>
            <person name="Oliver K."/>
            <person name="O'Neil S."/>
            <person name="Pearson D."/>
            <person name="Quail M.A."/>
            <person name="Rabbinowitsch E."/>
            <person name="Rutherford K.M."/>
            <person name="Rutter S."/>
            <person name="Saunders D."/>
            <person name="Seeger K."/>
            <person name="Sharp S."/>
            <person name="Skelton J."/>
            <person name="Simmonds M.N."/>
            <person name="Squares R."/>
            <person name="Squares S."/>
            <person name="Stevens K."/>
            <person name="Taylor K."/>
            <person name="Taylor R.G."/>
            <person name="Tivey A."/>
            <person name="Walsh S.V."/>
            <person name="Warren T."/>
            <person name="Whitehead S."/>
            <person name="Woodward J.R."/>
            <person name="Volckaert G."/>
            <person name="Aert R."/>
            <person name="Robben J."/>
            <person name="Grymonprez B."/>
            <person name="Weltjens I."/>
            <person name="Vanstreels E."/>
            <person name="Rieger M."/>
            <person name="Schaefer M."/>
            <person name="Mueller-Auer S."/>
            <person name="Gabel C."/>
            <person name="Fuchs M."/>
            <person name="Duesterhoeft A."/>
            <person name="Fritzc C."/>
            <person name="Holzer E."/>
            <person name="Moestl D."/>
            <person name="Hilbert H."/>
            <person name="Borzym K."/>
            <person name="Langer I."/>
            <person name="Beck A."/>
            <person name="Lehrach H."/>
            <person name="Reinhardt R."/>
            <person name="Pohl T.M."/>
            <person name="Eger P."/>
            <person name="Zimmermann W."/>
            <person name="Wedler H."/>
            <person name="Wambutt R."/>
            <person name="Purnelle B."/>
            <person name="Goffeau A."/>
            <person name="Cadieu E."/>
            <person name="Dreano S."/>
            <person name="Gloux S."/>
            <person name="Lelaure V."/>
            <person name="Mottier S."/>
            <person name="Galibert F."/>
            <person name="Aves S.J."/>
            <person name="Xiang Z."/>
            <person name="Hunt C."/>
            <person name="Moore K."/>
            <person name="Hurst S.M."/>
            <person name="Lucas M."/>
            <person name="Rochet M."/>
            <person name="Gaillardin C."/>
            <person name="Tallada V.A."/>
            <person name="Garzon A."/>
            <person name="Thode G."/>
            <person name="Daga R.R."/>
            <person name="Cruzado L."/>
            <person name="Jimenez J."/>
            <person name="Sanchez M."/>
            <person name="del Rey F."/>
            <person name="Benito J."/>
            <person name="Dominguez A."/>
            <person name="Revuelta J.L."/>
            <person name="Moreno S."/>
            <person name="Armstrong J."/>
            <person name="Forsburg S.L."/>
            <person name="Cerutti L."/>
            <person name="Lowe T."/>
            <person name="McCombie W.R."/>
            <person name="Paulsen I."/>
            <person name="Potashkin J."/>
            <person name="Shpakovski G.V."/>
            <person name="Ussery D."/>
            <person name="Barrell B.G."/>
            <person name="Nurse P."/>
        </authorList>
    </citation>
    <scope>NUCLEOTIDE SEQUENCE [LARGE SCALE GENOMIC DNA]</scope>
    <source>
        <strain>972 / ATCC 24843</strain>
    </source>
</reference>
<reference key="2">
    <citation type="journal article" date="2006" name="Nat. Biotechnol.">
        <title>ORFeome cloning and global analysis of protein localization in the fission yeast Schizosaccharomyces pombe.</title>
        <authorList>
            <person name="Matsuyama A."/>
            <person name="Arai R."/>
            <person name="Yashiroda Y."/>
            <person name="Shirai A."/>
            <person name="Kamata A."/>
            <person name="Sekido S."/>
            <person name="Kobayashi Y."/>
            <person name="Hashimoto A."/>
            <person name="Hamamoto M."/>
            <person name="Hiraoka Y."/>
            <person name="Horinouchi S."/>
            <person name="Yoshida M."/>
        </authorList>
    </citation>
    <scope>SUBCELLULAR LOCATION [LARGE SCALE ANALYSIS]</scope>
</reference>
<reference key="3">
    <citation type="journal article" date="2008" name="J. Proteome Res.">
        <title>Phosphoproteome analysis of fission yeast.</title>
        <authorList>
            <person name="Wilson-Grady J.T."/>
            <person name="Villen J."/>
            <person name="Gygi S.P."/>
        </authorList>
    </citation>
    <scope>PHOSPHORYLATION [LARGE SCALE ANALYSIS] AT THR-172; SER-500; THR-503 AND SER-506</scope>
    <scope>IDENTIFICATION BY MASS SPECTROMETRY</scope>
</reference>
<reference key="4">
    <citation type="journal article" date="2016" name="J. Struct. Funct. Genomics">
        <title>Expression, purification, and crystallization of Schizosaccharomyces pombe eIF2B.</title>
        <authorList>
            <person name="Kashiwagi K."/>
            <person name="Shigeta T."/>
            <person name="Imataka H."/>
            <person name="Ito T."/>
            <person name="Yokoyama S."/>
        </authorList>
    </citation>
    <scope>FUNCTION</scope>
    <scope>SUBUNIT</scope>
    <scope>IDENTIFICATION IN THE EIF2B COMPLEX</scope>
</reference>
<reference evidence="9" key="5">
    <citation type="journal article" date="2016" name="Nature">
        <title>Crystal structure of eukaryotic translation initiation factor 2B.</title>
        <authorList>
            <person name="Kashiwagi K."/>
            <person name="Takahashi M."/>
            <person name="Nishimoto M."/>
            <person name="Hiyama T.B."/>
            <person name="Higo T."/>
            <person name="Umehara T."/>
            <person name="Sakamoto K."/>
            <person name="Ito T."/>
            <person name="Yokoyama S."/>
        </authorList>
    </citation>
    <scope>X-RAY CRYSTALLOGRAPHY (2.99 ANGSTROMS)</scope>
    <scope>FUNCTION</scope>
    <scope>SUBUNIT</scope>
    <scope>IDENTIFICATION IN THE EIF2B COMPLEX</scope>
</reference>
<reference evidence="10 11" key="6">
    <citation type="journal article" date="2019" name="Science">
        <title>Structural basis for eIF2B inhibition in integrated stress response.</title>
        <authorList>
            <person name="Kashiwagi K."/>
            <person name="Yokoyama T."/>
            <person name="Nishimoto M."/>
            <person name="Takahashi M."/>
            <person name="Sakamoto A."/>
            <person name="Yonemochi M."/>
            <person name="Shirouzu M."/>
            <person name="Ito T."/>
        </authorList>
    </citation>
    <scope>X-RAY CRYSTALLOGRAPHY (3.35 ANGSTROMS) IN COMPLEX WITH S.CEREVISIAE SUI2</scope>
    <scope>FUNCTION</scope>
    <scope>SUBUNIT</scope>
    <scope>IDENTIFICATION IN THE EIF2B COMPLEX</scope>
</reference>
<comment type="function">
    <text evidence="5 6 7">Acts as a component of the translation initiation factor 2B (eIF2B) complex, which catalyzes the exchange of GDP for GTP on the eukaryotic initiation factor 2 (eIF2) complex gamma subunit (PubMed:26901872, PubMed:27023709, PubMed:31048492). Its guanine nucleotide exchange factor activity is repressed when bound to eIF2 complex phosphorylated on the alpha subunit, thereby limiting the amount of methionyl-initiator methionine tRNA available to the ribosome and consequently global translation is repressed (PubMed:26901872, PubMed:31048492).</text>
</comment>
<comment type="subunit">
    <text evidence="5 6 7">Component of the translation initiation factor 2B (eIF2B) complex which is a heterodecamer of two sets of five different subunits: alpha, beta, gamma, delta and epsilon. Subunits alpha, beta and delta comprise a regulatory subcomplex and subunits epsilon and gamma comprise a catalytic subcomplex (PubMed:26901872, PubMed:27023709, PubMed:31048492). Within the complex, the hexameric regulatory complex resides at the center, with the two heterodimeric catalytic subcomplexes bound on opposite sides (PubMed:26901872, PubMed:31048492).</text>
</comment>
<comment type="subcellular location">
    <subcellularLocation>
        <location evidence="3">Cytoplasm</location>
        <location evidence="3">Cytosol</location>
    </subcellularLocation>
</comment>
<comment type="similarity">
    <text evidence="8">Belongs to the eIF-2B gamma/epsilon subunits family.</text>
</comment>
<organism>
    <name type="scientific">Schizosaccharomyces pombe (strain 972 / ATCC 24843)</name>
    <name type="common">Fission yeast</name>
    <dbReference type="NCBI Taxonomy" id="284812"/>
    <lineage>
        <taxon>Eukaryota</taxon>
        <taxon>Fungi</taxon>
        <taxon>Dikarya</taxon>
        <taxon>Ascomycota</taxon>
        <taxon>Taphrinomycotina</taxon>
        <taxon>Schizosaccharomycetes</taxon>
        <taxon>Schizosaccharomycetales</taxon>
        <taxon>Schizosaccharomycetaceae</taxon>
        <taxon>Schizosaccharomyces</taxon>
    </lineage>
</organism>
<dbReference type="EMBL" id="CU329670">
    <property type="protein sequence ID" value="CAB16302.1"/>
    <property type="molecule type" value="Genomic_DNA"/>
</dbReference>
<dbReference type="PIR" id="T39151">
    <property type="entry name" value="T39151"/>
</dbReference>
<dbReference type="RefSeq" id="NP_594285.1">
    <property type="nucleotide sequence ID" value="NM_001019708.2"/>
</dbReference>
<dbReference type="PDB" id="5B04">
    <property type="method" value="X-ray"/>
    <property type="resolution" value="2.99 A"/>
    <property type="chains" value="I/J=1-678"/>
</dbReference>
<dbReference type="PDB" id="6JLY">
    <property type="method" value="X-ray"/>
    <property type="resolution" value="3.50 A"/>
    <property type="chains" value="I/J=1-678"/>
</dbReference>
<dbReference type="PDB" id="6JLZ">
    <property type="method" value="X-ray"/>
    <property type="resolution" value="3.35 A"/>
    <property type="chains" value="I/J=1-678"/>
</dbReference>
<dbReference type="PDBsum" id="5B04"/>
<dbReference type="PDBsum" id="6JLY"/>
<dbReference type="PDBsum" id="6JLZ"/>
<dbReference type="SMR" id="P56287"/>
<dbReference type="BioGRID" id="278500">
    <property type="interactions" value="4"/>
</dbReference>
<dbReference type="DIP" id="DIP-61962N"/>
<dbReference type="FunCoup" id="P56287">
    <property type="interactions" value="777"/>
</dbReference>
<dbReference type="IntAct" id="P56287">
    <property type="interactions" value="3"/>
</dbReference>
<dbReference type="STRING" id="284812.P56287"/>
<dbReference type="iPTMnet" id="P56287"/>
<dbReference type="PaxDb" id="4896-SPAC8C9.15c.1"/>
<dbReference type="EnsemblFungi" id="SPAC8C9.15c.1">
    <property type="protein sequence ID" value="SPAC8C9.15c.1:pep"/>
    <property type="gene ID" value="SPAC8C9.15c"/>
</dbReference>
<dbReference type="GeneID" id="2542017"/>
<dbReference type="KEGG" id="spo:2542017"/>
<dbReference type="PomBase" id="SPAC8C9.15c">
    <property type="gene designation" value="tif225"/>
</dbReference>
<dbReference type="VEuPathDB" id="FungiDB:SPAC8C9.15c"/>
<dbReference type="eggNOG" id="KOG1461">
    <property type="taxonomic scope" value="Eukaryota"/>
</dbReference>
<dbReference type="HOGENOM" id="CLU_012507_1_0_1"/>
<dbReference type="InParanoid" id="P56287"/>
<dbReference type="OMA" id="LAQSCKI"/>
<dbReference type="PhylomeDB" id="P56287"/>
<dbReference type="Reactome" id="R-SPO-72731">
    <property type="pathway name" value="Recycling of eIF2:GDP"/>
</dbReference>
<dbReference type="PRO" id="PR:P56287"/>
<dbReference type="Proteomes" id="UP000002485">
    <property type="component" value="Chromosome I"/>
</dbReference>
<dbReference type="GO" id="GO:0005829">
    <property type="term" value="C:cytosol"/>
    <property type="evidence" value="ECO:0007005"/>
    <property type="project" value="PomBase"/>
</dbReference>
<dbReference type="GO" id="GO:0005851">
    <property type="term" value="C:eukaryotic translation initiation factor 2B complex"/>
    <property type="evidence" value="ECO:0000314"/>
    <property type="project" value="PomBase"/>
</dbReference>
<dbReference type="GO" id="GO:0005085">
    <property type="term" value="F:guanyl-nucleotide exchange factor activity"/>
    <property type="evidence" value="ECO:0000314"/>
    <property type="project" value="PomBase"/>
</dbReference>
<dbReference type="GO" id="GO:0003743">
    <property type="term" value="F:translation initiation factor activity"/>
    <property type="evidence" value="ECO:0000314"/>
    <property type="project" value="PomBase"/>
</dbReference>
<dbReference type="GO" id="GO:0031369">
    <property type="term" value="F:translation initiation factor binding"/>
    <property type="evidence" value="ECO:0000318"/>
    <property type="project" value="GO_Central"/>
</dbReference>
<dbReference type="GO" id="GO:0002183">
    <property type="term" value="P:cytoplasmic translational initiation"/>
    <property type="evidence" value="ECO:0000314"/>
    <property type="project" value="PomBase"/>
</dbReference>
<dbReference type="CDD" id="cd04197">
    <property type="entry name" value="eIF-2B_epsilon_N"/>
    <property type="match status" value="1"/>
</dbReference>
<dbReference type="CDD" id="cd05787">
    <property type="entry name" value="LbH_eIF2B_epsilon"/>
    <property type="match status" value="1"/>
</dbReference>
<dbReference type="CDD" id="cd11558">
    <property type="entry name" value="W2_eIF2B_epsilon"/>
    <property type="match status" value="1"/>
</dbReference>
<dbReference type="DisProt" id="DP02516"/>
<dbReference type="FunFam" id="1.25.40.180:FF:000022">
    <property type="entry name" value="Translation initiation factor eIF-2B epsilon subunit"/>
    <property type="match status" value="1"/>
</dbReference>
<dbReference type="FunFam" id="3.90.550.10:FF:000066">
    <property type="entry name" value="Translation initiation factor eIF-2B subunit epsilon"/>
    <property type="match status" value="1"/>
</dbReference>
<dbReference type="Gene3D" id="1.25.40.180">
    <property type="match status" value="1"/>
</dbReference>
<dbReference type="Gene3D" id="2.160.10.10">
    <property type="entry name" value="Hexapeptide repeat proteins"/>
    <property type="match status" value="1"/>
</dbReference>
<dbReference type="Gene3D" id="3.90.550.10">
    <property type="entry name" value="Spore Coat Polysaccharide Biosynthesis Protein SpsA, Chain A"/>
    <property type="match status" value="1"/>
</dbReference>
<dbReference type="InterPro" id="IPR016024">
    <property type="entry name" value="ARM-type_fold"/>
</dbReference>
<dbReference type="InterPro" id="IPR035543">
    <property type="entry name" value="eIF-2B_epsilon_N"/>
</dbReference>
<dbReference type="InterPro" id="IPR051956">
    <property type="entry name" value="eIF2B_epsilon"/>
</dbReference>
<dbReference type="InterPro" id="IPR005835">
    <property type="entry name" value="NTP_transferase_dom"/>
</dbReference>
<dbReference type="InterPro" id="IPR029044">
    <property type="entry name" value="Nucleotide-diphossugar_trans"/>
</dbReference>
<dbReference type="InterPro" id="IPR011004">
    <property type="entry name" value="Trimer_LpxA-like_sf"/>
</dbReference>
<dbReference type="InterPro" id="IPR003307">
    <property type="entry name" value="W2_domain"/>
</dbReference>
<dbReference type="InterPro" id="IPR044123">
    <property type="entry name" value="W2_eIF2B_epsilon"/>
</dbReference>
<dbReference type="PANTHER" id="PTHR45887">
    <property type="entry name" value="TRANSLATION INITIATION FACTOR EIF-2B SUBUNIT EPSILON"/>
    <property type="match status" value="1"/>
</dbReference>
<dbReference type="PANTHER" id="PTHR45887:SF1">
    <property type="entry name" value="TRANSLATION INITIATION FACTOR EIF-2B SUBUNIT EPSILON"/>
    <property type="match status" value="1"/>
</dbReference>
<dbReference type="Pfam" id="PF25084">
    <property type="entry name" value="LbH_EIF2B"/>
    <property type="match status" value="1"/>
</dbReference>
<dbReference type="Pfam" id="PF00483">
    <property type="entry name" value="NTP_transferase"/>
    <property type="match status" value="1"/>
</dbReference>
<dbReference type="Pfam" id="PF02020">
    <property type="entry name" value="W2"/>
    <property type="match status" value="1"/>
</dbReference>
<dbReference type="SMART" id="SM00515">
    <property type="entry name" value="eIF5C"/>
    <property type="match status" value="1"/>
</dbReference>
<dbReference type="SUPFAM" id="SSF48371">
    <property type="entry name" value="ARM repeat"/>
    <property type="match status" value="1"/>
</dbReference>
<dbReference type="SUPFAM" id="SSF53448">
    <property type="entry name" value="Nucleotide-diphospho-sugar transferases"/>
    <property type="match status" value="1"/>
</dbReference>
<dbReference type="SUPFAM" id="SSF51161">
    <property type="entry name" value="Trimeric LpxA-like enzymes"/>
    <property type="match status" value="1"/>
</dbReference>
<dbReference type="PROSITE" id="PS51363">
    <property type="entry name" value="W2"/>
    <property type="match status" value="1"/>
</dbReference>
<feature type="chain" id="PRO_0000156077" description="Translation initiation factor eIF2B subunit epsilon">
    <location>
        <begin position="1"/>
        <end position="678"/>
    </location>
</feature>
<feature type="domain" description="W2" evidence="1">
    <location>
        <begin position="508"/>
        <end position="674"/>
    </location>
</feature>
<feature type="region of interest" description="Disordered" evidence="2">
    <location>
        <begin position="467"/>
        <end position="489"/>
    </location>
</feature>
<feature type="modified residue" description="Phosphothreonine" evidence="4">
    <location>
        <position position="172"/>
    </location>
</feature>
<feature type="modified residue" description="Phosphoserine" evidence="4">
    <location>
        <position position="500"/>
    </location>
</feature>
<feature type="modified residue" description="Phosphothreonine" evidence="4">
    <location>
        <position position="503"/>
    </location>
</feature>
<feature type="modified residue" description="Phosphoserine" evidence="4">
    <location>
        <position position="506"/>
    </location>
</feature>
<feature type="helix" evidence="14">
    <location>
        <begin position="15"/>
        <end position="17"/>
    </location>
</feature>
<feature type="strand" evidence="12">
    <location>
        <begin position="19"/>
        <end position="23"/>
    </location>
</feature>
<feature type="strand" evidence="14">
    <location>
        <begin position="29"/>
        <end position="31"/>
    </location>
</feature>
<feature type="turn" evidence="12">
    <location>
        <begin position="32"/>
        <end position="35"/>
    </location>
</feature>
<feature type="strand" evidence="12">
    <location>
        <begin position="36"/>
        <end position="38"/>
    </location>
</feature>
<feature type="helix" evidence="12">
    <location>
        <begin position="40"/>
        <end position="42"/>
    </location>
</feature>
<feature type="strand" evidence="12">
    <location>
        <begin position="43"/>
        <end position="49"/>
    </location>
</feature>
<feature type="helix" evidence="12">
    <location>
        <begin position="50"/>
        <end position="61"/>
    </location>
</feature>
<feature type="strand" evidence="12">
    <location>
        <begin position="65"/>
        <end position="70"/>
    </location>
</feature>
<feature type="helix" evidence="12">
    <location>
        <begin position="74"/>
        <end position="83"/>
    </location>
</feature>
<feature type="helix" evidence="12">
    <location>
        <begin position="85"/>
        <end position="87"/>
    </location>
</feature>
<feature type="strand" evidence="12">
    <location>
        <begin position="92"/>
        <end position="99"/>
    </location>
</feature>
<feature type="helix" evidence="12">
    <location>
        <begin position="108"/>
        <end position="115"/>
    </location>
</feature>
<feature type="strand" evidence="12">
    <location>
        <begin position="123"/>
        <end position="128"/>
    </location>
</feature>
<feature type="strand" evidence="12">
    <location>
        <begin position="130"/>
        <end position="132"/>
    </location>
</feature>
<feature type="helix" evidence="12">
    <location>
        <begin position="137"/>
        <end position="147"/>
    </location>
</feature>
<feature type="strand" evidence="12">
    <location>
        <begin position="153"/>
        <end position="161"/>
    </location>
</feature>
<feature type="turn" evidence="12">
    <location>
        <begin position="171"/>
        <end position="173"/>
    </location>
</feature>
<feature type="strand" evidence="12">
    <location>
        <begin position="174"/>
        <end position="179"/>
    </location>
</feature>
<feature type="turn" evidence="12">
    <location>
        <begin position="181"/>
        <end position="183"/>
    </location>
</feature>
<feature type="strand" evidence="12">
    <location>
        <begin position="185"/>
        <end position="191"/>
    </location>
</feature>
<feature type="strand" evidence="12">
    <location>
        <begin position="198"/>
        <end position="200"/>
    </location>
</feature>
<feature type="helix" evidence="12">
    <location>
        <begin position="204"/>
        <end position="209"/>
    </location>
</feature>
<feature type="strand" evidence="12">
    <location>
        <begin position="212"/>
        <end position="226"/>
    </location>
</feature>
<feature type="helix" evidence="12">
    <location>
        <begin position="229"/>
        <end position="236"/>
    </location>
</feature>
<feature type="turn" evidence="14">
    <location>
        <begin position="237"/>
        <end position="239"/>
    </location>
</feature>
<feature type="turn" evidence="12">
    <location>
        <begin position="243"/>
        <end position="246"/>
    </location>
</feature>
<feature type="helix" evidence="12">
    <location>
        <begin position="247"/>
        <end position="252"/>
    </location>
</feature>
<feature type="strand" evidence="12">
    <location>
        <begin position="260"/>
        <end position="266"/>
    </location>
</feature>
<feature type="strand" evidence="12">
    <location>
        <begin position="271"/>
        <end position="273"/>
    </location>
</feature>
<feature type="helix" evidence="12">
    <location>
        <begin position="277"/>
        <end position="288"/>
    </location>
</feature>
<feature type="helix" evidence="12">
    <location>
        <begin position="290"/>
        <end position="292"/>
    </location>
</feature>
<feature type="helix" evidence="12">
    <location>
        <begin position="297"/>
        <end position="299"/>
    </location>
</feature>
<feature type="strand" evidence="12">
    <location>
        <begin position="307"/>
        <end position="309"/>
    </location>
</feature>
<feature type="turn" evidence="12">
    <location>
        <begin position="310"/>
        <end position="312"/>
    </location>
</feature>
<feature type="strand" evidence="12">
    <location>
        <begin position="313"/>
        <end position="315"/>
    </location>
</feature>
<feature type="strand" evidence="13">
    <location>
        <begin position="329"/>
        <end position="333"/>
    </location>
</feature>
<feature type="strand" evidence="12">
    <location>
        <begin position="344"/>
        <end position="347"/>
    </location>
</feature>
<feature type="strand" evidence="12">
    <location>
        <begin position="361"/>
        <end position="364"/>
    </location>
</feature>
<feature type="strand" evidence="12">
    <location>
        <begin position="378"/>
        <end position="381"/>
    </location>
</feature>
<feature type="strand" evidence="12">
    <location>
        <begin position="422"/>
        <end position="428"/>
    </location>
</feature>
<feature type="strand" evidence="14">
    <location>
        <begin position="432"/>
        <end position="434"/>
    </location>
</feature>
<feature type="strand" evidence="12">
    <location>
        <begin position="436"/>
        <end position="438"/>
    </location>
</feature>
<keyword id="KW-0002">3D-structure</keyword>
<keyword id="KW-0963">Cytoplasm</keyword>
<keyword id="KW-0396">Initiation factor</keyword>
<keyword id="KW-0597">Phosphoprotein</keyword>
<keyword id="KW-0648">Protein biosynthesis</keyword>
<keyword id="KW-1185">Reference proteome</keyword>
<name>EI2BE_SCHPO</name>
<proteinExistence type="evidence at protein level"/>
<accession>P56287</accession>
<evidence type="ECO:0000255" key="1">
    <source>
        <dbReference type="PROSITE-ProRule" id="PRU00695"/>
    </source>
</evidence>
<evidence type="ECO:0000256" key="2">
    <source>
        <dbReference type="SAM" id="MobiDB-lite"/>
    </source>
</evidence>
<evidence type="ECO:0000269" key="3">
    <source>
    </source>
</evidence>
<evidence type="ECO:0000269" key="4">
    <source>
    </source>
</evidence>
<evidence type="ECO:0000269" key="5">
    <source>
    </source>
</evidence>
<evidence type="ECO:0000269" key="6">
    <source>
    </source>
</evidence>
<evidence type="ECO:0000269" key="7">
    <source>
    </source>
</evidence>
<evidence type="ECO:0000305" key="8"/>
<evidence type="ECO:0007744" key="9">
    <source>
        <dbReference type="PDB" id="5B04"/>
    </source>
</evidence>
<evidence type="ECO:0007744" key="10">
    <source>
        <dbReference type="PDB" id="6JLY"/>
    </source>
</evidence>
<evidence type="ECO:0007744" key="11">
    <source>
        <dbReference type="PDB" id="6JLZ"/>
    </source>
</evidence>
<evidence type="ECO:0007829" key="12">
    <source>
        <dbReference type="PDB" id="5B04"/>
    </source>
</evidence>
<evidence type="ECO:0007829" key="13">
    <source>
        <dbReference type="PDB" id="6JLY"/>
    </source>
</evidence>
<evidence type="ECO:0007829" key="14">
    <source>
        <dbReference type="PDB" id="6JLZ"/>
    </source>
</evidence>
<protein>
    <recommendedName>
        <fullName>Translation initiation factor eIF2B subunit epsilon</fullName>
    </recommendedName>
    <alternativeName>
        <fullName>eIF2B GDP-GTP exchange factor subunit epsilon</fullName>
    </alternativeName>
</protein>
<gene>
    <name type="primary">tif225</name>
    <name type="ORF">SPAC8C9.15c</name>
</gene>